<gene>
    <name evidence="1" type="primary">pheS</name>
    <name type="ordered locus">Hac_0461</name>
</gene>
<proteinExistence type="inferred from homology"/>
<feature type="chain" id="PRO_1000006841" description="Phenylalanine--tRNA ligase alpha subunit">
    <location>
        <begin position="1"/>
        <end position="328"/>
    </location>
</feature>
<feature type="binding site" evidence="1">
    <location>
        <position position="245"/>
    </location>
    <ligand>
        <name>Mg(2+)</name>
        <dbReference type="ChEBI" id="CHEBI:18420"/>
        <note>shared with beta subunit</note>
    </ligand>
</feature>
<keyword id="KW-0030">Aminoacyl-tRNA synthetase</keyword>
<keyword id="KW-0067">ATP-binding</keyword>
<keyword id="KW-0963">Cytoplasm</keyword>
<keyword id="KW-0436">Ligase</keyword>
<keyword id="KW-0460">Magnesium</keyword>
<keyword id="KW-0479">Metal-binding</keyword>
<keyword id="KW-0547">Nucleotide-binding</keyword>
<keyword id="KW-0648">Protein biosynthesis</keyword>
<reference key="1">
    <citation type="journal article" date="2006" name="PLoS Genet.">
        <title>Who ate whom? Adaptive Helicobacter genomic changes that accompanied a host jump from early humans to large felines.</title>
        <authorList>
            <person name="Eppinger M."/>
            <person name="Baar C."/>
            <person name="Linz B."/>
            <person name="Raddatz G."/>
            <person name="Lanz C."/>
            <person name="Keller H."/>
            <person name="Morelli G."/>
            <person name="Gressmann H."/>
            <person name="Achtman M."/>
            <person name="Schuster S.C."/>
        </authorList>
    </citation>
    <scope>NUCLEOTIDE SEQUENCE [LARGE SCALE GENOMIC DNA]</scope>
    <source>
        <strain>Sheeba</strain>
    </source>
</reference>
<protein>
    <recommendedName>
        <fullName evidence="1">Phenylalanine--tRNA ligase alpha subunit</fullName>
        <ecNumber evidence="1">6.1.1.20</ecNumber>
    </recommendedName>
    <alternativeName>
        <fullName evidence="1">Phenylalanyl-tRNA synthetase alpha subunit</fullName>
        <shortName evidence="1">PheRS</shortName>
    </alternativeName>
</protein>
<organism>
    <name type="scientific">Helicobacter acinonychis (strain Sheeba)</name>
    <dbReference type="NCBI Taxonomy" id="382638"/>
    <lineage>
        <taxon>Bacteria</taxon>
        <taxon>Pseudomonadati</taxon>
        <taxon>Campylobacterota</taxon>
        <taxon>Epsilonproteobacteria</taxon>
        <taxon>Campylobacterales</taxon>
        <taxon>Helicobacteraceae</taxon>
        <taxon>Helicobacter</taxon>
    </lineage>
</organism>
<sequence length="328" mass="37905">MHTLIERLEKVTNNKELEEVRLNALGKKGVFADKFNQLKNLNGGEKNAFAKEIHHYKQAFEKAFELKKKAIIELELEERLKKEKIDVSLFNTTKTSSSHPLNYTKNKIIEFFTPLGYKLEIGSLVEDDFHNFSALNLPPYHPARDMQDTFYFKDHKLLRTHTSPVQIHTMQEQTPPIKMICLGETFRRDYDLTHTPMFHQIEGLVVDQKGNIHFTHLKGVIEDFLHYFFGGVKLRWRSSFFPFTEPSAEVDISCVFCKQEGCRVCSHMGWLEVLGCGMVNNAVFEAIGYKGMSGFAFGMGIERLAMLTCQINDLRSFFETDLRVLEGF</sequence>
<evidence type="ECO:0000255" key="1">
    <source>
        <dbReference type="HAMAP-Rule" id="MF_00281"/>
    </source>
</evidence>
<name>SYFA_HELAH</name>
<comment type="catalytic activity">
    <reaction evidence="1">
        <text>tRNA(Phe) + L-phenylalanine + ATP = L-phenylalanyl-tRNA(Phe) + AMP + diphosphate + H(+)</text>
        <dbReference type="Rhea" id="RHEA:19413"/>
        <dbReference type="Rhea" id="RHEA-COMP:9668"/>
        <dbReference type="Rhea" id="RHEA-COMP:9699"/>
        <dbReference type="ChEBI" id="CHEBI:15378"/>
        <dbReference type="ChEBI" id="CHEBI:30616"/>
        <dbReference type="ChEBI" id="CHEBI:33019"/>
        <dbReference type="ChEBI" id="CHEBI:58095"/>
        <dbReference type="ChEBI" id="CHEBI:78442"/>
        <dbReference type="ChEBI" id="CHEBI:78531"/>
        <dbReference type="ChEBI" id="CHEBI:456215"/>
        <dbReference type="EC" id="6.1.1.20"/>
    </reaction>
</comment>
<comment type="cofactor">
    <cofactor evidence="1">
        <name>Mg(2+)</name>
        <dbReference type="ChEBI" id="CHEBI:18420"/>
    </cofactor>
    <text evidence="1">Binds 2 magnesium ions per tetramer.</text>
</comment>
<comment type="subunit">
    <text evidence="1">Tetramer of two alpha and two beta subunits.</text>
</comment>
<comment type="subcellular location">
    <subcellularLocation>
        <location evidence="1">Cytoplasm</location>
    </subcellularLocation>
</comment>
<comment type="similarity">
    <text evidence="1">Belongs to the class-II aminoacyl-tRNA synthetase family. Phe-tRNA synthetase alpha subunit type 1 subfamily.</text>
</comment>
<dbReference type="EC" id="6.1.1.20" evidence="1"/>
<dbReference type="EMBL" id="AM260522">
    <property type="protein sequence ID" value="CAJ99292.1"/>
    <property type="molecule type" value="Genomic_DNA"/>
</dbReference>
<dbReference type="RefSeq" id="WP_011577406.1">
    <property type="nucleotide sequence ID" value="NC_008229.1"/>
</dbReference>
<dbReference type="SMR" id="Q17YI4"/>
<dbReference type="STRING" id="382638.Hac_0461"/>
<dbReference type="GeneID" id="31757966"/>
<dbReference type="KEGG" id="hac:Hac_0461"/>
<dbReference type="eggNOG" id="COG0016">
    <property type="taxonomic scope" value="Bacteria"/>
</dbReference>
<dbReference type="HOGENOM" id="CLU_025086_0_1_7"/>
<dbReference type="OrthoDB" id="9800719at2"/>
<dbReference type="BioCyc" id="HACI382638:HAC_RS02110-MONOMER"/>
<dbReference type="Proteomes" id="UP000000775">
    <property type="component" value="Chromosome"/>
</dbReference>
<dbReference type="GO" id="GO:0005737">
    <property type="term" value="C:cytoplasm"/>
    <property type="evidence" value="ECO:0007669"/>
    <property type="project" value="UniProtKB-SubCell"/>
</dbReference>
<dbReference type="GO" id="GO:0005524">
    <property type="term" value="F:ATP binding"/>
    <property type="evidence" value="ECO:0007669"/>
    <property type="project" value="UniProtKB-UniRule"/>
</dbReference>
<dbReference type="GO" id="GO:0000287">
    <property type="term" value="F:magnesium ion binding"/>
    <property type="evidence" value="ECO:0007669"/>
    <property type="project" value="UniProtKB-UniRule"/>
</dbReference>
<dbReference type="GO" id="GO:0004826">
    <property type="term" value="F:phenylalanine-tRNA ligase activity"/>
    <property type="evidence" value="ECO:0007669"/>
    <property type="project" value="UniProtKB-UniRule"/>
</dbReference>
<dbReference type="GO" id="GO:0000049">
    <property type="term" value="F:tRNA binding"/>
    <property type="evidence" value="ECO:0007669"/>
    <property type="project" value="InterPro"/>
</dbReference>
<dbReference type="GO" id="GO:0006432">
    <property type="term" value="P:phenylalanyl-tRNA aminoacylation"/>
    <property type="evidence" value="ECO:0007669"/>
    <property type="project" value="UniProtKB-UniRule"/>
</dbReference>
<dbReference type="CDD" id="cd00496">
    <property type="entry name" value="PheRS_alpha_core"/>
    <property type="match status" value="1"/>
</dbReference>
<dbReference type="Gene3D" id="3.30.930.10">
    <property type="entry name" value="Bira Bifunctional Protein, Domain 2"/>
    <property type="match status" value="1"/>
</dbReference>
<dbReference type="HAMAP" id="MF_00281">
    <property type="entry name" value="Phe_tRNA_synth_alpha1"/>
    <property type="match status" value="1"/>
</dbReference>
<dbReference type="InterPro" id="IPR006195">
    <property type="entry name" value="aa-tRNA-synth_II"/>
</dbReference>
<dbReference type="InterPro" id="IPR045864">
    <property type="entry name" value="aa-tRNA-synth_II/BPL/LPL"/>
</dbReference>
<dbReference type="InterPro" id="IPR004529">
    <property type="entry name" value="Phe-tRNA-synth_IIc_asu"/>
</dbReference>
<dbReference type="InterPro" id="IPR004188">
    <property type="entry name" value="Phe-tRNA_ligase_II_N"/>
</dbReference>
<dbReference type="InterPro" id="IPR022911">
    <property type="entry name" value="Phe_tRNA_ligase_alpha1_bac"/>
</dbReference>
<dbReference type="InterPro" id="IPR002319">
    <property type="entry name" value="Phenylalanyl-tRNA_Synthase"/>
</dbReference>
<dbReference type="InterPro" id="IPR010978">
    <property type="entry name" value="tRNA-bd_arm"/>
</dbReference>
<dbReference type="NCBIfam" id="TIGR00468">
    <property type="entry name" value="pheS"/>
    <property type="match status" value="1"/>
</dbReference>
<dbReference type="PANTHER" id="PTHR11538:SF41">
    <property type="entry name" value="PHENYLALANINE--TRNA LIGASE, MITOCHONDRIAL"/>
    <property type="match status" value="1"/>
</dbReference>
<dbReference type="PANTHER" id="PTHR11538">
    <property type="entry name" value="PHENYLALANYL-TRNA SYNTHETASE"/>
    <property type="match status" value="1"/>
</dbReference>
<dbReference type="Pfam" id="PF02912">
    <property type="entry name" value="Phe_tRNA-synt_N"/>
    <property type="match status" value="1"/>
</dbReference>
<dbReference type="Pfam" id="PF01409">
    <property type="entry name" value="tRNA-synt_2d"/>
    <property type="match status" value="1"/>
</dbReference>
<dbReference type="SUPFAM" id="SSF55681">
    <property type="entry name" value="Class II aaRS and biotin synthetases"/>
    <property type="match status" value="1"/>
</dbReference>
<dbReference type="SUPFAM" id="SSF46589">
    <property type="entry name" value="tRNA-binding arm"/>
    <property type="match status" value="1"/>
</dbReference>
<dbReference type="PROSITE" id="PS50862">
    <property type="entry name" value="AA_TRNA_LIGASE_II"/>
    <property type="match status" value="1"/>
</dbReference>
<accession>Q17YI4</accession>